<evidence type="ECO:0000250" key="1"/>
<evidence type="ECO:0000250" key="2">
    <source>
        <dbReference type="UniProtKB" id="Q99P68"/>
    </source>
</evidence>
<evidence type="ECO:0000250" key="3">
    <source>
        <dbReference type="UniProtKB" id="Q9BQB4"/>
    </source>
</evidence>
<evidence type="ECO:0000255" key="4"/>
<evidence type="ECO:0000256" key="5">
    <source>
        <dbReference type="SAM" id="MobiDB-lite"/>
    </source>
</evidence>
<evidence type="ECO:0000305" key="6"/>
<feature type="signal peptide" evidence="4">
    <location>
        <begin position="1"/>
        <end position="23"/>
    </location>
</feature>
<feature type="chain" id="PRO_0000033176" description="Sclerostin">
    <location>
        <begin position="24"/>
        <end position="213"/>
    </location>
</feature>
<feature type="domain" description="CTCK">
    <location>
        <begin position="82"/>
        <end position="172"/>
    </location>
</feature>
<feature type="region of interest" description="Disordered" evidence="5">
    <location>
        <begin position="41"/>
        <end position="71"/>
    </location>
</feature>
<feature type="region of interest" description="Disordered" evidence="5">
    <location>
        <begin position="178"/>
        <end position="213"/>
    </location>
</feature>
<feature type="compositionally biased region" description="Basic residues" evidence="5">
    <location>
        <begin position="190"/>
        <end position="201"/>
    </location>
</feature>
<feature type="glycosylation site" description="N-linked (GlcNAc...) asparagine" evidence="4">
    <location>
        <position position="53"/>
    </location>
</feature>
<feature type="glycosylation site" description="N-linked (GlcNAc...) asparagine" evidence="4">
    <location>
        <position position="175"/>
    </location>
</feature>
<feature type="disulfide bond" evidence="1">
    <location>
        <begin position="80"/>
        <end position="134"/>
    </location>
</feature>
<feature type="disulfide bond" evidence="1">
    <location>
        <begin position="94"/>
        <end position="148"/>
    </location>
</feature>
<feature type="disulfide bond" evidence="1">
    <location>
        <begin position="105"/>
        <end position="165"/>
    </location>
</feature>
<feature type="disulfide bond" evidence="1">
    <location>
        <begin position="109"/>
        <end position="167"/>
    </location>
</feature>
<protein>
    <recommendedName>
        <fullName evidence="2">Sclerostin</fullName>
    </recommendedName>
</protein>
<organism>
    <name type="scientific">Chlorocebus aethiops</name>
    <name type="common">Green monkey</name>
    <name type="synonym">Cercopithecus aethiops</name>
    <dbReference type="NCBI Taxonomy" id="9534"/>
    <lineage>
        <taxon>Eukaryota</taxon>
        <taxon>Metazoa</taxon>
        <taxon>Chordata</taxon>
        <taxon>Craniata</taxon>
        <taxon>Vertebrata</taxon>
        <taxon>Euteleostomi</taxon>
        <taxon>Mammalia</taxon>
        <taxon>Eutheria</taxon>
        <taxon>Euarchontoglires</taxon>
        <taxon>Primates</taxon>
        <taxon>Haplorrhini</taxon>
        <taxon>Catarrhini</taxon>
        <taxon>Cercopithecidae</taxon>
        <taxon>Cercopithecinae</taxon>
        <taxon>Chlorocebus</taxon>
    </lineage>
</organism>
<dbReference type="EMBL" id="AF326742">
    <property type="protein sequence ID" value="AAK13457.1"/>
    <property type="molecule type" value="mRNA"/>
</dbReference>
<dbReference type="SMR" id="Q9BG78"/>
<dbReference type="GlyCosmos" id="Q9BG78">
    <property type="glycosylation" value="2 sites, No reported glycans"/>
</dbReference>
<dbReference type="GO" id="GO:0005615">
    <property type="term" value="C:extracellular space"/>
    <property type="evidence" value="ECO:0007669"/>
    <property type="project" value="InterPro"/>
</dbReference>
<dbReference type="GO" id="GO:0036122">
    <property type="term" value="F:BMP binding"/>
    <property type="evidence" value="ECO:0007669"/>
    <property type="project" value="TreeGrafter"/>
</dbReference>
<dbReference type="GO" id="GO:0008201">
    <property type="term" value="F:heparin binding"/>
    <property type="evidence" value="ECO:0007669"/>
    <property type="project" value="UniProtKB-KW"/>
</dbReference>
<dbReference type="GO" id="GO:0030514">
    <property type="term" value="P:negative regulation of BMP signaling pathway"/>
    <property type="evidence" value="ECO:0007669"/>
    <property type="project" value="TreeGrafter"/>
</dbReference>
<dbReference type="GO" id="GO:0030178">
    <property type="term" value="P:negative regulation of Wnt signaling pathway"/>
    <property type="evidence" value="ECO:0007669"/>
    <property type="project" value="TreeGrafter"/>
</dbReference>
<dbReference type="GO" id="GO:0001503">
    <property type="term" value="P:ossification"/>
    <property type="evidence" value="ECO:0007669"/>
    <property type="project" value="TreeGrafter"/>
</dbReference>
<dbReference type="GO" id="GO:0016055">
    <property type="term" value="P:Wnt signaling pathway"/>
    <property type="evidence" value="ECO:0007669"/>
    <property type="project" value="UniProtKB-KW"/>
</dbReference>
<dbReference type="FunFam" id="2.10.90.10:FF:000036">
    <property type="entry name" value="Sclerostin"/>
    <property type="match status" value="1"/>
</dbReference>
<dbReference type="Gene3D" id="2.10.90.10">
    <property type="entry name" value="Cystine-knot cytokines"/>
    <property type="match status" value="1"/>
</dbReference>
<dbReference type="InterPro" id="IPR006207">
    <property type="entry name" value="Cys_knot_C"/>
</dbReference>
<dbReference type="InterPro" id="IPR029034">
    <property type="entry name" value="Cystine-knot_cytokine"/>
</dbReference>
<dbReference type="InterPro" id="IPR008835">
    <property type="entry name" value="Sclerostin/SOSTDC1"/>
</dbReference>
<dbReference type="PANTHER" id="PTHR14903:SF4">
    <property type="entry name" value="SCLEROSTIN"/>
    <property type="match status" value="1"/>
</dbReference>
<dbReference type="PANTHER" id="PTHR14903">
    <property type="entry name" value="SCLEROSTIN-RELATED"/>
    <property type="match status" value="1"/>
</dbReference>
<dbReference type="Pfam" id="PF05463">
    <property type="entry name" value="Sclerostin"/>
    <property type="match status" value="1"/>
</dbReference>
<dbReference type="SMART" id="SM00041">
    <property type="entry name" value="CT"/>
    <property type="match status" value="1"/>
</dbReference>
<keyword id="KW-1015">Disulfide bond</keyword>
<keyword id="KW-0272">Extracellular matrix</keyword>
<keyword id="KW-0325">Glycoprotein</keyword>
<keyword id="KW-0358">Heparin-binding</keyword>
<keyword id="KW-0964">Secreted</keyword>
<keyword id="KW-0732">Signal</keyword>
<keyword id="KW-0879">Wnt signaling pathway</keyword>
<accession>Q9BG78</accession>
<sequence length="213" mass="23908">MQLPLALCLVCLLVHAAFRVVEGQGWQAFKNDATEIIPELGEYPEPPPELENNKTMNRAENGGRPPHHPFETKDVSEYSCRELHFTRYVTDGPCRSAKPVTELVCSGQCGPARLLPNAIGRGKWWRPSGPDFRCIPDRYRAQRVQLLCPGGAAPRARKVRLVASCKCKRLTRFHNQSELKDFGPEAARPQKGRKPRPRARGAKANQAELENAY</sequence>
<name>SOST_CHLAE</name>
<reference key="1">
    <citation type="journal article" date="2001" name="Am. J. Hum. Genet.">
        <title>Bone dysplasia sclerosteosis results from loss of the SOST gene product, a novel cystine knot-containing protein.</title>
        <authorList>
            <person name="Brunkow M.E."/>
            <person name="Gardner J.C."/>
            <person name="Van Ness J."/>
            <person name="Paeper B.W."/>
            <person name="Kovacevich B.R."/>
            <person name="Proll S."/>
            <person name="Skonier J.E."/>
            <person name="Zhao L."/>
            <person name="Sabo P.J."/>
            <person name="Fu Y.H."/>
            <person name="Alisch R.S."/>
            <person name="Gillett L."/>
            <person name="Colbert T."/>
            <person name="Tacconi P."/>
            <person name="Galas D."/>
            <person name="Hamersma H."/>
            <person name="Beighton P."/>
            <person name="Mulligan J.T."/>
        </authorList>
    </citation>
    <scope>NUCLEOTIDE SEQUENCE [MRNA]</scope>
</reference>
<gene>
    <name evidence="3" type="primary">SOST</name>
</gene>
<proteinExistence type="evidence at transcript level"/>
<comment type="function">
    <text evidence="1">Negative regulator of bone growth that acts through inhibition of Wnt signaling and bone formation.</text>
</comment>
<comment type="subunit">
    <text evidence="1">Interacts with LRP4 (via the extracellular domain); the interaction facilitates the inhibition of Wnt signaling. Interacts with LRP5 (via the first two YWTD-EGF repeat domains); the interaction inhibits Wnt-mediated signaling. Interacts with LRP6.</text>
</comment>
<comment type="subcellular location">
    <subcellularLocation>
        <location evidence="1">Secreted</location>
        <location evidence="1">Extracellular space</location>
        <location evidence="1">Extracellular matrix</location>
    </subcellularLocation>
</comment>
<comment type="similarity">
    <text evidence="6">Belongs to the sclerostin family.</text>
</comment>